<organism>
    <name type="scientific">Bos taurus</name>
    <name type="common">Bovine</name>
    <dbReference type="NCBI Taxonomy" id="9913"/>
    <lineage>
        <taxon>Eukaryota</taxon>
        <taxon>Metazoa</taxon>
        <taxon>Chordata</taxon>
        <taxon>Craniata</taxon>
        <taxon>Vertebrata</taxon>
        <taxon>Euteleostomi</taxon>
        <taxon>Mammalia</taxon>
        <taxon>Eutheria</taxon>
        <taxon>Laurasiatheria</taxon>
        <taxon>Artiodactyla</taxon>
        <taxon>Ruminantia</taxon>
        <taxon>Pecora</taxon>
        <taxon>Bovidae</taxon>
        <taxon>Bovinae</taxon>
        <taxon>Bos</taxon>
    </lineage>
</organism>
<proteinExistence type="evidence at transcript level"/>
<feature type="chain" id="PRO_0000289272" description="Protein AMN1 homolog">
    <location>
        <begin position="1"/>
        <end position="258"/>
    </location>
</feature>
<comment type="subunit">
    <text evidence="1">Interacts with TASOR.</text>
</comment>
<comment type="similarity">
    <text evidence="2">Belongs to the AMN1 family.</text>
</comment>
<comment type="sequence caution" evidence="2">
    <conflict type="erroneous initiation">
        <sequence resource="EMBL-CDS" id="AAI09823"/>
    </conflict>
</comment>
<keyword id="KW-1185">Reference proteome</keyword>
<protein>
    <recommendedName>
        <fullName>Protein AMN1 homolog</fullName>
    </recommendedName>
</protein>
<evidence type="ECO:0000250" key="1">
    <source>
        <dbReference type="UniProtKB" id="B8JKV0"/>
    </source>
</evidence>
<evidence type="ECO:0000305" key="2"/>
<gene>
    <name type="primary">AMN1</name>
</gene>
<reference key="1">
    <citation type="submission" date="2005-11" db="EMBL/GenBank/DDBJ databases">
        <authorList>
            <consortium name="NIH - Mammalian Gene Collection (MGC) project"/>
        </authorList>
    </citation>
    <scope>NUCLEOTIDE SEQUENCE [LARGE SCALE MRNA]</scope>
    <source>
        <strain>Crossbred X Angus</strain>
        <tissue>Liver</tissue>
    </source>
</reference>
<dbReference type="EMBL" id="BC109822">
    <property type="protein sequence ID" value="AAI09823.1"/>
    <property type="status" value="ALT_INIT"/>
    <property type="molecule type" value="mRNA"/>
</dbReference>
<dbReference type="RefSeq" id="NP_001069326.2">
    <property type="nucleotide sequence ID" value="NM_001075858.2"/>
</dbReference>
<dbReference type="SMR" id="Q32L08"/>
<dbReference type="FunCoup" id="Q32L08">
    <property type="interactions" value="916"/>
</dbReference>
<dbReference type="STRING" id="9913.ENSBTAP00000018812"/>
<dbReference type="PaxDb" id="9913-ENSBTAP00000018812"/>
<dbReference type="GeneID" id="524465"/>
<dbReference type="KEGG" id="bta:524465"/>
<dbReference type="CTD" id="196394"/>
<dbReference type="eggNOG" id="KOG1947">
    <property type="taxonomic scope" value="Eukaryota"/>
</dbReference>
<dbReference type="InParanoid" id="Q32L08"/>
<dbReference type="OrthoDB" id="10257471at2759"/>
<dbReference type="Proteomes" id="UP000009136">
    <property type="component" value="Unplaced"/>
</dbReference>
<dbReference type="GO" id="GO:0005737">
    <property type="term" value="C:cytoplasm"/>
    <property type="evidence" value="ECO:0000318"/>
    <property type="project" value="GO_Central"/>
</dbReference>
<dbReference type="FunFam" id="3.80.10.10:FF:000178">
    <property type="entry name" value="protein AMN1 homolog isoform X1"/>
    <property type="match status" value="1"/>
</dbReference>
<dbReference type="Gene3D" id="3.80.10.10">
    <property type="entry name" value="Ribonuclease Inhibitor"/>
    <property type="match status" value="1"/>
</dbReference>
<dbReference type="InterPro" id="IPR001611">
    <property type="entry name" value="Leu-rich_rpt"/>
</dbReference>
<dbReference type="InterPro" id="IPR006553">
    <property type="entry name" value="Leu-rich_rpt_Cys-con_subtyp"/>
</dbReference>
<dbReference type="InterPro" id="IPR032675">
    <property type="entry name" value="LRR_dom_sf"/>
</dbReference>
<dbReference type="PANTHER" id="PTHR13318">
    <property type="entry name" value="PARTNER OF PAIRED, ISOFORM B-RELATED"/>
    <property type="match status" value="1"/>
</dbReference>
<dbReference type="PANTHER" id="PTHR13318:SF254">
    <property type="entry name" value="PROTEIN AMN1 HOMOLOG"/>
    <property type="match status" value="1"/>
</dbReference>
<dbReference type="Pfam" id="PF13516">
    <property type="entry name" value="LRR_6"/>
    <property type="match status" value="2"/>
</dbReference>
<dbReference type="SMART" id="SM00367">
    <property type="entry name" value="LRR_CC"/>
    <property type="match status" value="5"/>
</dbReference>
<dbReference type="SUPFAM" id="SSF52047">
    <property type="entry name" value="RNI-like"/>
    <property type="match status" value="1"/>
</dbReference>
<accession>Q32L08</accession>
<sequence>MPSPQRVSQLLDLCLWCFMKNISRYITDIKPLPPNIKDRLIKIMSVQGQITDSNISEILHPEVQTLDLRSCDISDTALLHLCNCRKLKKLNLKSSKENRISITSKGIKAVASSCSYLHEASLKRCCNLTDEGVLALALNCRLLKIIDLGGCLGITDVSLQALGENCAFLQCVDFSATQVSDHGVVALVSGPCAKKLEEIHMGHCVNLTDEAVEAVLTCCPQICILLFHGCPLITDHSREVLEQLVGPNKLKQVTWTVY</sequence>
<name>AMN1_BOVIN</name>